<reference key="1">
    <citation type="journal article" date="1998" name="Biol. Reprod.">
        <title>Isolation and partial characterization of a pregnancy-associated glycoprotein family from the goat placenta.</title>
        <authorList>
            <person name="Garbayo J.M."/>
            <person name="Remy B."/>
            <person name="Alabart J.L."/>
            <person name="Folch J."/>
            <person name="Wattiez R."/>
            <person name="Falmagne P."/>
            <person name="Beckers J.-F.M.P."/>
        </authorList>
    </citation>
    <scope>PROTEIN SEQUENCE</scope>
    <source>
        <tissue>Placenta</tissue>
    </source>
</reference>
<keyword id="KW-0064">Aspartyl protease</keyword>
<keyword id="KW-0903">Direct protein sequencing</keyword>
<keyword id="KW-0325">Glycoprotein</keyword>
<keyword id="KW-0378">Hydrolase</keyword>
<keyword id="KW-0645">Protease</keyword>
<keyword id="KW-1185">Reference proteome</keyword>
<protein>
    <recommendedName>
        <fullName>Pregnancy-associated glycoprotein 55</fullName>
        <shortName>PAG 55</shortName>
        <ecNumber>3.4.23.-</ecNumber>
    </recommendedName>
</protein>
<dbReference type="EC" id="3.4.23.-"/>
<dbReference type="STRING" id="9925.ENSCHIP00000017544"/>
<dbReference type="MEROPS" id="A01.077"/>
<dbReference type="Proteomes" id="UP000291000">
    <property type="component" value="Unassembled WGS sequence"/>
</dbReference>
<dbReference type="Proteomes" id="UP000694566">
    <property type="component" value="Unplaced"/>
</dbReference>
<dbReference type="GO" id="GO:0004190">
    <property type="term" value="F:aspartic-type endopeptidase activity"/>
    <property type="evidence" value="ECO:0007669"/>
    <property type="project" value="UniProtKB-KW"/>
</dbReference>
<dbReference type="GO" id="GO:0006508">
    <property type="term" value="P:proteolysis"/>
    <property type="evidence" value="ECO:0007669"/>
    <property type="project" value="UniProtKB-KW"/>
</dbReference>
<sequence>ISSPVSXLTIHPLRNIMDMLYVGXITI</sequence>
<feature type="chain" id="PRO_0000199529" description="Pregnancy-associated glycoprotein 55">
    <location>
        <begin position="1"/>
        <end position="27" status="greater than"/>
    </location>
</feature>
<feature type="non-terminal residue">
    <location>
        <position position="27"/>
    </location>
</feature>
<accession>P80935</accession>
<proteinExistence type="evidence at protein level"/>
<organism>
    <name type="scientific">Capra hircus</name>
    <name type="common">Goat</name>
    <dbReference type="NCBI Taxonomy" id="9925"/>
    <lineage>
        <taxon>Eukaryota</taxon>
        <taxon>Metazoa</taxon>
        <taxon>Chordata</taxon>
        <taxon>Craniata</taxon>
        <taxon>Vertebrata</taxon>
        <taxon>Euteleostomi</taxon>
        <taxon>Mammalia</taxon>
        <taxon>Eutheria</taxon>
        <taxon>Laurasiatheria</taxon>
        <taxon>Artiodactyla</taxon>
        <taxon>Ruminantia</taxon>
        <taxon>Pecora</taxon>
        <taxon>Bovidae</taxon>
        <taxon>Caprinae</taxon>
        <taxon>Capra</taxon>
    </lineage>
</organism>
<name>PAG55_CAPHI</name>
<gene>
    <name type="primary">PAG55</name>
</gene>
<evidence type="ECO:0000305" key="1"/>
<comment type="tissue specificity">
    <text>Placenta.</text>
</comment>
<comment type="PTM">
    <text evidence="1">Glycosylated.</text>
</comment>
<comment type="similarity">
    <text evidence="1">Belongs to the peptidase A1 family.</text>
</comment>